<sequence length="226" mass="25134">MYTLIIPAAGQGKRMGAGKNKLFLLINGVPIIVHTLRAFEKDKACKRIIMAINEEERPYFEELMQKYPVEKQVQFIQGGAERQDSVYNALQYVSGVEYVLVHDGARPFVTNKMMQDVLTAAEKYGASICAVPVKDTIKKVEQGVVVETVERSQLKAVQTPQGFSVPLLLEAHRSAKQSCFLGTDDASLVERVGKKVGVVEGSYYNIKVTTPEDLLIAESFLHVQKK</sequence>
<evidence type="ECO:0000255" key="1">
    <source>
        <dbReference type="HAMAP-Rule" id="MF_00108"/>
    </source>
</evidence>
<gene>
    <name evidence="1" type="primary">ispD</name>
    <name type="ordered locus">BcerKBAB4_0080</name>
</gene>
<organism>
    <name type="scientific">Bacillus mycoides (strain KBAB4)</name>
    <name type="common">Bacillus weihenstephanensis</name>
    <dbReference type="NCBI Taxonomy" id="315730"/>
    <lineage>
        <taxon>Bacteria</taxon>
        <taxon>Bacillati</taxon>
        <taxon>Bacillota</taxon>
        <taxon>Bacilli</taxon>
        <taxon>Bacillales</taxon>
        <taxon>Bacillaceae</taxon>
        <taxon>Bacillus</taxon>
        <taxon>Bacillus cereus group</taxon>
    </lineage>
</organism>
<feature type="chain" id="PRO_1000094309" description="2-C-methyl-D-erythritol 4-phosphate cytidylyltransferase">
    <location>
        <begin position="1"/>
        <end position="226"/>
    </location>
</feature>
<feature type="site" description="Transition state stabilizer" evidence="1">
    <location>
        <position position="14"/>
    </location>
</feature>
<feature type="site" description="Transition state stabilizer" evidence="1">
    <location>
        <position position="21"/>
    </location>
</feature>
<feature type="site" description="Positions MEP for the nucleophilic attack" evidence="1">
    <location>
        <position position="151"/>
    </location>
</feature>
<feature type="site" description="Positions MEP for the nucleophilic attack" evidence="1">
    <location>
        <position position="207"/>
    </location>
</feature>
<dbReference type="EC" id="2.7.7.60" evidence="1"/>
<dbReference type="EMBL" id="CP000903">
    <property type="protein sequence ID" value="ABY41349.1"/>
    <property type="molecule type" value="Genomic_DNA"/>
</dbReference>
<dbReference type="RefSeq" id="WP_002009811.1">
    <property type="nucleotide sequence ID" value="NC_010184.1"/>
</dbReference>
<dbReference type="SMR" id="A9VN98"/>
<dbReference type="KEGG" id="bwe:BcerKBAB4_0080"/>
<dbReference type="eggNOG" id="COG1211">
    <property type="taxonomic scope" value="Bacteria"/>
</dbReference>
<dbReference type="HOGENOM" id="CLU_061281_2_2_9"/>
<dbReference type="UniPathway" id="UPA00056">
    <property type="reaction ID" value="UER00093"/>
</dbReference>
<dbReference type="Proteomes" id="UP000002154">
    <property type="component" value="Chromosome"/>
</dbReference>
<dbReference type="GO" id="GO:0050518">
    <property type="term" value="F:2-C-methyl-D-erythritol 4-phosphate cytidylyltransferase activity"/>
    <property type="evidence" value="ECO:0007669"/>
    <property type="project" value="UniProtKB-UniRule"/>
</dbReference>
<dbReference type="GO" id="GO:0019288">
    <property type="term" value="P:isopentenyl diphosphate biosynthetic process, methylerythritol 4-phosphate pathway"/>
    <property type="evidence" value="ECO:0007669"/>
    <property type="project" value="UniProtKB-UniRule"/>
</dbReference>
<dbReference type="CDD" id="cd02516">
    <property type="entry name" value="CDP-ME_synthetase"/>
    <property type="match status" value="1"/>
</dbReference>
<dbReference type="FunFam" id="3.90.550.10:FF:000003">
    <property type="entry name" value="2-C-methyl-D-erythritol 4-phosphate cytidylyltransferase"/>
    <property type="match status" value="1"/>
</dbReference>
<dbReference type="Gene3D" id="3.90.550.10">
    <property type="entry name" value="Spore Coat Polysaccharide Biosynthesis Protein SpsA, Chain A"/>
    <property type="match status" value="1"/>
</dbReference>
<dbReference type="HAMAP" id="MF_00108">
    <property type="entry name" value="IspD"/>
    <property type="match status" value="1"/>
</dbReference>
<dbReference type="InterPro" id="IPR001228">
    <property type="entry name" value="IspD"/>
</dbReference>
<dbReference type="InterPro" id="IPR034683">
    <property type="entry name" value="IspD/TarI"/>
</dbReference>
<dbReference type="InterPro" id="IPR050088">
    <property type="entry name" value="IspD/TarI_cytidylyltransf_bact"/>
</dbReference>
<dbReference type="InterPro" id="IPR018294">
    <property type="entry name" value="ISPD_synthase_CS"/>
</dbReference>
<dbReference type="InterPro" id="IPR029044">
    <property type="entry name" value="Nucleotide-diphossugar_trans"/>
</dbReference>
<dbReference type="NCBIfam" id="TIGR00453">
    <property type="entry name" value="ispD"/>
    <property type="match status" value="1"/>
</dbReference>
<dbReference type="PANTHER" id="PTHR32125">
    <property type="entry name" value="2-C-METHYL-D-ERYTHRITOL 4-PHOSPHATE CYTIDYLYLTRANSFERASE, CHLOROPLASTIC"/>
    <property type="match status" value="1"/>
</dbReference>
<dbReference type="PANTHER" id="PTHR32125:SF4">
    <property type="entry name" value="2-C-METHYL-D-ERYTHRITOL 4-PHOSPHATE CYTIDYLYLTRANSFERASE, CHLOROPLASTIC"/>
    <property type="match status" value="1"/>
</dbReference>
<dbReference type="Pfam" id="PF01128">
    <property type="entry name" value="IspD"/>
    <property type="match status" value="1"/>
</dbReference>
<dbReference type="SUPFAM" id="SSF53448">
    <property type="entry name" value="Nucleotide-diphospho-sugar transferases"/>
    <property type="match status" value="1"/>
</dbReference>
<dbReference type="PROSITE" id="PS01295">
    <property type="entry name" value="ISPD"/>
    <property type="match status" value="1"/>
</dbReference>
<keyword id="KW-0414">Isoprene biosynthesis</keyword>
<keyword id="KW-0548">Nucleotidyltransferase</keyword>
<keyword id="KW-0808">Transferase</keyword>
<reference key="1">
    <citation type="journal article" date="2008" name="Chem. Biol. Interact.">
        <title>Extending the Bacillus cereus group genomics to putative food-borne pathogens of different toxicity.</title>
        <authorList>
            <person name="Lapidus A."/>
            <person name="Goltsman E."/>
            <person name="Auger S."/>
            <person name="Galleron N."/>
            <person name="Segurens B."/>
            <person name="Dossat C."/>
            <person name="Land M.L."/>
            <person name="Broussolle V."/>
            <person name="Brillard J."/>
            <person name="Guinebretiere M.-H."/>
            <person name="Sanchis V."/>
            <person name="Nguen-the C."/>
            <person name="Lereclus D."/>
            <person name="Richardson P."/>
            <person name="Wincker P."/>
            <person name="Weissenbach J."/>
            <person name="Ehrlich S.D."/>
            <person name="Sorokin A."/>
        </authorList>
    </citation>
    <scope>NUCLEOTIDE SEQUENCE [LARGE SCALE GENOMIC DNA]</scope>
    <source>
        <strain>KBAB4</strain>
    </source>
</reference>
<accession>A9VN98</accession>
<name>ISPD_BACMK</name>
<comment type="function">
    <text evidence="1">Catalyzes the formation of 4-diphosphocytidyl-2-C-methyl-D-erythritol from CTP and 2-C-methyl-D-erythritol 4-phosphate (MEP).</text>
</comment>
<comment type="catalytic activity">
    <reaction evidence="1">
        <text>2-C-methyl-D-erythritol 4-phosphate + CTP + H(+) = 4-CDP-2-C-methyl-D-erythritol + diphosphate</text>
        <dbReference type="Rhea" id="RHEA:13429"/>
        <dbReference type="ChEBI" id="CHEBI:15378"/>
        <dbReference type="ChEBI" id="CHEBI:33019"/>
        <dbReference type="ChEBI" id="CHEBI:37563"/>
        <dbReference type="ChEBI" id="CHEBI:57823"/>
        <dbReference type="ChEBI" id="CHEBI:58262"/>
        <dbReference type="EC" id="2.7.7.60"/>
    </reaction>
</comment>
<comment type="pathway">
    <text evidence="1">Isoprenoid biosynthesis; isopentenyl diphosphate biosynthesis via DXP pathway; isopentenyl diphosphate from 1-deoxy-D-xylulose 5-phosphate: step 2/6.</text>
</comment>
<comment type="similarity">
    <text evidence="1">Belongs to the IspD/TarI cytidylyltransferase family. IspD subfamily.</text>
</comment>
<protein>
    <recommendedName>
        <fullName evidence="1">2-C-methyl-D-erythritol 4-phosphate cytidylyltransferase</fullName>
        <ecNumber evidence="1">2.7.7.60</ecNumber>
    </recommendedName>
    <alternativeName>
        <fullName evidence="1">4-diphosphocytidyl-2C-methyl-D-erythritol synthase</fullName>
    </alternativeName>
    <alternativeName>
        <fullName evidence="1">MEP cytidylyltransferase</fullName>
        <shortName evidence="1">MCT</shortName>
    </alternativeName>
</protein>
<proteinExistence type="inferred from homology"/>